<feature type="chain" id="PRO_0000310043" description="Large ribosomal subunit protein uL2">
    <location>
        <begin position="1"/>
        <end position="243"/>
    </location>
</feature>
<feature type="region of interest" description="Disordered" evidence="2">
    <location>
        <begin position="202"/>
        <end position="243"/>
    </location>
</feature>
<feature type="compositionally biased region" description="Basic residues" evidence="2">
    <location>
        <begin position="233"/>
        <end position="243"/>
    </location>
</feature>
<accession>A0RZ09</accession>
<organism>
    <name type="scientific">Cenarchaeum symbiosum (strain A)</name>
    <dbReference type="NCBI Taxonomy" id="414004"/>
    <lineage>
        <taxon>Archaea</taxon>
        <taxon>Nitrososphaerota</taxon>
        <taxon>Candidatus Cenarchaeales</taxon>
        <taxon>Candidatus Cenarchaeaceae</taxon>
        <taxon>Candidatus Cenarchaeum</taxon>
    </lineage>
</organism>
<proteinExistence type="inferred from homology"/>
<gene>
    <name evidence="1" type="primary">rpl2</name>
    <name type="ordered locus">CENSYa_1970</name>
</gene>
<keyword id="KW-1185">Reference proteome</keyword>
<keyword id="KW-0687">Ribonucleoprotein</keyword>
<keyword id="KW-0689">Ribosomal protein</keyword>
<keyword id="KW-0694">RNA-binding</keyword>
<keyword id="KW-0699">rRNA-binding</keyword>
<reference key="1">
    <citation type="journal article" date="2006" name="Proc. Natl. Acad. Sci. U.S.A.">
        <title>Genomic analysis of the uncultivated marine crenarchaeote Cenarchaeum symbiosum.</title>
        <authorList>
            <person name="Hallam S.J."/>
            <person name="Konstantinidis K.T."/>
            <person name="Putnam N."/>
            <person name="Schleper C."/>
            <person name="Watanabe Y."/>
            <person name="Sugahara J."/>
            <person name="Preston C."/>
            <person name="de la Torre J."/>
            <person name="Richardson P.M."/>
            <person name="DeLong E.F."/>
        </authorList>
    </citation>
    <scope>NUCLEOTIDE SEQUENCE [LARGE SCALE GENOMIC DNA]</scope>
    <source>
        <strain>A</strain>
    </source>
</reference>
<evidence type="ECO:0000255" key="1">
    <source>
        <dbReference type="HAMAP-Rule" id="MF_01320"/>
    </source>
</evidence>
<evidence type="ECO:0000256" key="2">
    <source>
        <dbReference type="SAM" id="MobiDB-lite"/>
    </source>
</evidence>
<evidence type="ECO:0000305" key="3"/>
<sequence length="243" mass="25893">MGKRPLVRRRGRGGMQFRAATTGKIARAKYPAFELGEQREGTVIDLVHERGRDAPLAKIRFEDGIVSYVPAVLGTRVGSSMNFGLKSEIRDGNVISVQNIPDGTTVCNVEKHYGDGGAIVKSAGGNATVFSHGEGGVVLKLPSGRFSTLNPKNRAMVGTLAGGGVSERPFMSAGGKWRRFRSKGRKYPIVRGVAQAAYVHPHGGGRHQHVGQSSTVSRNAPPGAKVGSIAARKTGRAKIKDRR</sequence>
<comment type="function">
    <text evidence="1">One of the primary rRNA binding proteins. Required for association of the 30S and 50S subunits to form the 70S ribosome, for tRNA binding and peptide bond formation. It has been suggested to have peptidyltransferase activity; this is somewhat controversial. Makes several contacts with the 16S rRNA in the 70S ribosome.</text>
</comment>
<comment type="subunit">
    <text evidence="1">Part of the 50S ribosomal subunit. Forms a bridge to the 30S subunit in the 70S ribosome.</text>
</comment>
<comment type="similarity">
    <text evidence="1">Belongs to the universal ribosomal protein uL2 family.</text>
</comment>
<dbReference type="EMBL" id="DP000238">
    <property type="protein sequence ID" value="ABK78576.1"/>
    <property type="molecule type" value="Genomic_DNA"/>
</dbReference>
<dbReference type="SMR" id="A0RZ09"/>
<dbReference type="STRING" id="414004.CENSYa_1970"/>
<dbReference type="EnsemblBacteria" id="ABK78576">
    <property type="protein sequence ID" value="ABK78576"/>
    <property type="gene ID" value="CENSYa_1970"/>
</dbReference>
<dbReference type="KEGG" id="csy:CENSYa_1970"/>
<dbReference type="PATRIC" id="fig|414004.10.peg.1803"/>
<dbReference type="HOGENOM" id="CLU_036235_0_1_2"/>
<dbReference type="Proteomes" id="UP000000758">
    <property type="component" value="Chromosome"/>
</dbReference>
<dbReference type="GO" id="GO:0022625">
    <property type="term" value="C:cytosolic large ribosomal subunit"/>
    <property type="evidence" value="ECO:0007669"/>
    <property type="project" value="TreeGrafter"/>
</dbReference>
<dbReference type="GO" id="GO:0019843">
    <property type="term" value="F:rRNA binding"/>
    <property type="evidence" value="ECO:0007669"/>
    <property type="project" value="UniProtKB-UniRule"/>
</dbReference>
<dbReference type="GO" id="GO:0003735">
    <property type="term" value="F:structural constituent of ribosome"/>
    <property type="evidence" value="ECO:0007669"/>
    <property type="project" value="InterPro"/>
</dbReference>
<dbReference type="GO" id="GO:0002181">
    <property type="term" value="P:cytoplasmic translation"/>
    <property type="evidence" value="ECO:0007669"/>
    <property type="project" value="TreeGrafter"/>
</dbReference>
<dbReference type="FunFam" id="4.10.950.10:FF:000002">
    <property type="entry name" value="60S ribosomal protein L2"/>
    <property type="match status" value="1"/>
</dbReference>
<dbReference type="Gene3D" id="2.30.30.30">
    <property type="match status" value="1"/>
</dbReference>
<dbReference type="Gene3D" id="2.40.50.140">
    <property type="entry name" value="Nucleic acid-binding proteins"/>
    <property type="match status" value="1"/>
</dbReference>
<dbReference type="Gene3D" id="4.10.950.10">
    <property type="entry name" value="Ribosomal protein L2, domain 3"/>
    <property type="match status" value="1"/>
</dbReference>
<dbReference type="HAMAP" id="MF_01320_A">
    <property type="entry name" value="Ribosomal_uL2_A"/>
    <property type="match status" value="1"/>
</dbReference>
<dbReference type="InterPro" id="IPR012340">
    <property type="entry name" value="NA-bd_OB-fold"/>
</dbReference>
<dbReference type="InterPro" id="IPR014722">
    <property type="entry name" value="Rib_uL2_dom2"/>
</dbReference>
<dbReference type="InterPro" id="IPR002171">
    <property type="entry name" value="Ribosomal_uL2"/>
</dbReference>
<dbReference type="InterPro" id="IPR023672">
    <property type="entry name" value="Ribosomal_uL2_arc_euk"/>
</dbReference>
<dbReference type="InterPro" id="IPR022669">
    <property type="entry name" value="Ribosomal_uL2_C"/>
</dbReference>
<dbReference type="InterPro" id="IPR014726">
    <property type="entry name" value="Ribosomal_uL2_dom3"/>
</dbReference>
<dbReference type="InterPro" id="IPR022666">
    <property type="entry name" value="Ribosomal_uL2_RNA-bd_dom"/>
</dbReference>
<dbReference type="InterPro" id="IPR008991">
    <property type="entry name" value="Translation_prot_SH3-like_sf"/>
</dbReference>
<dbReference type="NCBIfam" id="NF007180">
    <property type="entry name" value="PRK09612.1"/>
    <property type="match status" value="1"/>
</dbReference>
<dbReference type="PANTHER" id="PTHR13691:SF16">
    <property type="entry name" value="LARGE RIBOSOMAL SUBUNIT PROTEIN UL2"/>
    <property type="match status" value="1"/>
</dbReference>
<dbReference type="PANTHER" id="PTHR13691">
    <property type="entry name" value="RIBOSOMAL PROTEIN L2"/>
    <property type="match status" value="1"/>
</dbReference>
<dbReference type="Pfam" id="PF00181">
    <property type="entry name" value="Ribosomal_L2"/>
    <property type="match status" value="1"/>
</dbReference>
<dbReference type="Pfam" id="PF03947">
    <property type="entry name" value="Ribosomal_L2_C"/>
    <property type="match status" value="1"/>
</dbReference>
<dbReference type="PIRSF" id="PIRSF002158">
    <property type="entry name" value="Ribosomal_L2"/>
    <property type="match status" value="1"/>
</dbReference>
<dbReference type="SMART" id="SM01383">
    <property type="entry name" value="Ribosomal_L2"/>
    <property type="match status" value="1"/>
</dbReference>
<dbReference type="SMART" id="SM01382">
    <property type="entry name" value="Ribosomal_L2_C"/>
    <property type="match status" value="1"/>
</dbReference>
<dbReference type="SUPFAM" id="SSF50249">
    <property type="entry name" value="Nucleic acid-binding proteins"/>
    <property type="match status" value="1"/>
</dbReference>
<dbReference type="SUPFAM" id="SSF50104">
    <property type="entry name" value="Translation proteins SH3-like domain"/>
    <property type="match status" value="1"/>
</dbReference>
<protein>
    <recommendedName>
        <fullName evidence="1">Large ribosomal subunit protein uL2</fullName>
    </recommendedName>
    <alternativeName>
        <fullName evidence="3">50S ribosomal protein L2</fullName>
    </alternativeName>
</protein>
<name>RL2_CENSY</name>